<feature type="chain" id="PRO_0000221994" description="Nucleoprotein">
    <location>
        <begin position="1"/>
        <end position="243"/>
    </location>
</feature>
<feature type="binding site" evidence="4">
    <location>
        <position position="29"/>
    </location>
    <ligand>
        <name>RNA</name>
        <dbReference type="ChEBI" id="CHEBI:33697"/>
    </ligand>
</feature>
<feature type="binding site" evidence="4">
    <location>
        <position position="32"/>
    </location>
    <ligand>
        <name>RNA</name>
        <dbReference type="ChEBI" id="CHEBI:33697"/>
    </ligand>
</feature>
<feature type="binding site" evidence="4">
    <location>
        <position position="66"/>
    </location>
    <ligand>
        <name>RNA</name>
        <dbReference type="ChEBI" id="CHEBI:33697"/>
    </ligand>
</feature>
<feature type="binding site" evidence="4">
    <location>
        <position position="104"/>
    </location>
    <ligand>
        <name>RNA</name>
        <dbReference type="ChEBI" id="CHEBI:33697"/>
    </ligand>
</feature>
<feature type="binding site" evidence="4">
    <location>
        <position position="105"/>
    </location>
    <ligand>
        <name>RNA</name>
        <dbReference type="ChEBI" id="CHEBI:33697"/>
    </ligand>
</feature>
<feature type="binding site" evidence="4">
    <location>
        <position position="184"/>
    </location>
    <ligand>
        <name>RNA</name>
        <dbReference type="ChEBI" id="CHEBI:33697"/>
    </ligand>
</feature>
<feature type="binding site" evidence="4">
    <location>
        <position position="194"/>
    </location>
    <ligand>
        <name>RNA</name>
        <dbReference type="ChEBI" id="CHEBI:33697"/>
    </ligand>
</feature>
<feature type="binding site" evidence="4">
    <location>
        <position position="197"/>
    </location>
    <ligand>
        <name>RNA</name>
        <dbReference type="ChEBI" id="CHEBI:33697"/>
    </ligand>
</feature>
<feature type="binding site" evidence="4">
    <location>
        <position position="204"/>
    </location>
    <ligand>
        <name>RNA</name>
        <dbReference type="ChEBI" id="CHEBI:33697"/>
    </ligand>
</feature>
<feature type="site" description="RNA-binding" evidence="1">
    <location>
        <position position="29"/>
    </location>
</feature>
<feature type="site" description="RNA-binding" evidence="1">
    <location>
        <position position="32"/>
    </location>
</feature>
<feature type="site" description="RNA-binding" evidence="1">
    <location>
        <position position="65"/>
    </location>
</feature>
<feature type="site" description="RNA-binding" evidence="1">
    <location>
        <position position="66"/>
    </location>
</feature>
<feature type="site" description="RNA-binding" evidence="1">
    <location>
        <position position="98"/>
    </location>
</feature>
<feature type="site" description="RNA-binding" evidence="1">
    <location>
        <position position="105"/>
    </location>
</feature>
<name>NCAP_PTPV</name>
<protein>
    <recommendedName>
        <fullName>Nucleoprotein</fullName>
    </recommendedName>
    <alternativeName>
        <fullName>Nucleocapsid protein</fullName>
        <shortName>Protein N</shortName>
    </alternativeName>
</protein>
<comment type="function">
    <text evidence="1 3">Encapsidates the genomic RNA, protecting it from nucleases. Displays high affinity for single-stranded nucleic acid. The encapsidated genomic RNA is termed the nucleocapsid (NC) or ribonucleoprotein. The ribonucleoprotein has a non-helical structure (By similarity). Serves as template for viral transcription and replication. After replication, the nucleocapsid is recruited to the host Golgi apparatus by glycoprotein Gn for packaging into virus particles (By similarity).</text>
</comment>
<comment type="subunit">
    <text evidence="1 3 4">Homodimer. Homohexamer; ring-shaped, necessary to form the nucleocapsid (By similarity). Homopentamers; opened pentamers in solution (By similarity). Binds to viral genomic RNA (By similarity). Interacts with glycoprotein Gn; this interaction allows packaging of nucleocapsids into virions (By similarity).</text>
</comment>
<comment type="subcellular location">
    <subcellularLocation>
        <location evidence="1">Virion</location>
    </subcellularLocation>
    <subcellularLocation>
        <location evidence="1">Host cytoplasm</location>
    </subcellularLocation>
    <subcellularLocation>
        <location evidence="1">Host nucleus</location>
    </subcellularLocation>
    <subcellularLocation>
        <location evidence="2">Host endoplasmic reticulum-Golgi intermediate compartment</location>
    </subcellularLocation>
    <subcellularLocation>
        <location evidence="2">Host Golgi apparatus</location>
    </subcellularLocation>
</comment>
<comment type="domain">
    <text evidence="4">The N-terminus is involved in homooligomerization.</text>
</comment>
<comment type="similarity">
    <text evidence="5">Belongs to the phlebovirus nucleocapsid protein family.</text>
</comment>
<reference key="1">
    <citation type="journal article" date="1984" name="Virology">
        <title>Novel coding strategy (ambisense genomic RNA) revealed by sequence analyses of Punta toro phlebovirus S RNA.</title>
        <authorList>
            <person name="Ihara T."/>
            <person name="Akashi H."/>
            <person name="Bishop D.H.L."/>
        </authorList>
    </citation>
    <scope>NUCLEOTIDE SEQUENCE [GENOMIC RNA]</scope>
</reference>
<proteinExistence type="inferred from homology"/>
<dbReference type="EMBL" id="K02736">
    <property type="protein sequence ID" value="AAA47114.1"/>
    <property type="molecule type" value="Genomic_RNA"/>
</dbReference>
<dbReference type="PIR" id="A04107">
    <property type="entry name" value="VHVUPT"/>
</dbReference>
<dbReference type="SMR" id="P03515"/>
<dbReference type="GO" id="GO:0019029">
    <property type="term" value="C:helical viral capsid"/>
    <property type="evidence" value="ECO:0007669"/>
    <property type="project" value="UniProtKB-KW"/>
</dbReference>
<dbReference type="GO" id="GO:0044172">
    <property type="term" value="C:host cell endoplasmic reticulum-Golgi intermediate compartment"/>
    <property type="evidence" value="ECO:0007669"/>
    <property type="project" value="UniProtKB-SubCell"/>
</dbReference>
<dbReference type="GO" id="GO:0044177">
    <property type="term" value="C:host cell Golgi apparatus"/>
    <property type="evidence" value="ECO:0007669"/>
    <property type="project" value="UniProtKB-SubCell"/>
</dbReference>
<dbReference type="GO" id="GO:0042025">
    <property type="term" value="C:host cell nucleus"/>
    <property type="evidence" value="ECO:0007669"/>
    <property type="project" value="UniProtKB-SubCell"/>
</dbReference>
<dbReference type="GO" id="GO:1990904">
    <property type="term" value="C:ribonucleoprotein complex"/>
    <property type="evidence" value="ECO:0007669"/>
    <property type="project" value="UniProtKB-KW"/>
</dbReference>
<dbReference type="GO" id="GO:0019013">
    <property type="term" value="C:viral nucleocapsid"/>
    <property type="evidence" value="ECO:0007669"/>
    <property type="project" value="UniProtKB-KW"/>
</dbReference>
<dbReference type="GO" id="GO:0003723">
    <property type="term" value="F:RNA binding"/>
    <property type="evidence" value="ECO:0007669"/>
    <property type="project" value="UniProtKB-KW"/>
</dbReference>
<dbReference type="InterPro" id="IPR009522">
    <property type="entry name" value="Capsid_Phlebovir/Tenuivir"/>
</dbReference>
<dbReference type="InterPro" id="IPR015971">
    <property type="entry name" value="Nucleocapsid_Phlebovirus"/>
</dbReference>
<dbReference type="Pfam" id="PF05733">
    <property type="entry name" value="Tenui_N"/>
    <property type="match status" value="1"/>
</dbReference>
<dbReference type="PIRSF" id="PIRSF003953">
    <property type="entry name" value="N_PhelboV"/>
    <property type="match status" value="1"/>
</dbReference>
<keyword id="KW-0167">Capsid protein</keyword>
<keyword id="KW-1139">Helical capsid protein</keyword>
<keyword id="KW-1035">Host cytoplasm</keyword>
<keyword id="KW-1040">Host Golgi apparatus</keyword>
<keyword id="KW-1048">Host nucleus</keyword>
<keyword id="KW-0687">Ribonucleoprotein</keyword>
<keyword id="KW-0694">RNA-binding</keyword>
<keyword id="KW-0543">Viral nucleoprotein</keyword>
<keyword id="KW-0946">Virion</keyword>
<evidence type="ECO:0000250" key="1">
    <source>
        <dbReference type="UniProtKB" id="D3K5I7"/>
    </source>
</evidence>
<evidence type="ECO:0000250" key="2">
    <source>
        <dbReference type="UniProtKB" id="I6WJ72"/>
    </source>
</evidence>
<evidence type="ECO:0000250" key="3">
    <source>
        <dbReference type="UniProtKB" id="P21700"/>
    </source>
</evidence>
<evidence type="ECO:0000250" key="4">
    <source>
        <dbReference type="UniProtKB" id="P21701"/>
    </source>
</evidence>
<evidence type="ECO:0000305" key="5"/>
<gene>
    <name type="primary">N</name>
</gene>
<sequence>MSYEEIAVQFASESIDEQTVAGWVTDFAYQGFDAKRVIALVKDRGGEDWKQDVKKMIVLSLTRGNKPNKMILKMSDKGKAMVNELVLKYKLKSGNPSRDDLTLSRITAAFAGWTCQAADYVQEYLPVTGRAMDAISSSYPRAMMHPSFAGLIDQELPADVFSEITQAHCLFMIQFSKTINPSLRGLSKDEIVSSFERPMQAAISSTFLTSANRRAMLKTLGIINDNLKPSSSTVSAAKVFRSL</sequence>
<organismHost>
    <name type="scientific">Homo sapiens</name>
    <name type="common">Human</name>
    <dbReference type="NCBI Taxonomy" id="9606"/>
</organismHost>
<organismHost>
    <name type="scientific">Phlebotomus papatasi</name>
    <name type="common">Sandfly</name>
    <dbReference type="NCBI Taxonomy" id="29031"/>
</organismHost>
<organism>
    <name type="scientific">Punta toro phlebovirus</name>
    <dbReference type="NCBI Taxonomy" id="11587"/>
    <lineage>
        <taxon>Viruses</taxon>
        <taxon>Riboviria</taxon>
        <taxon>Orthornavirae</taxon>
        <taxon>Negarnaviricota</taxon>
        <taxon>Polyploviricotina</taxon>
        <taxon>Ellioviricetes</taxon>
        <taxon>Bunyavirales</taxon>
        <taxon>Phenuiviridae</taxon>
        <taxon>Phlebovirus</taxon>
        <taxon>Phlebovirus toroense</taxon>
    </lineage>
</organism>
<accession>P03515</accession>